<sequence length="203" mass="22155">MSSKLRVGVAGPVGSGKTALLETLCLSLKNNYEIAVVTNDIYTKEDANFLINKKVLEEGRIIGVETGGCPHTAIREDCSLNKNAVLDLENRYKPLDFVFVESGGDNLASSFSPELVDLSIYVIDVSAGDKIPRKGGPGITRSDLLLINKIDLADMVGANLNIMKSDTEFMRKGKPWFFTNLSTGIGVEEITRFLESQIPNNQN</sequence>
<name>UREG_PROM9</name>
<evidence type="ECO:0000255" key="1">
    <source>
        <dbReference type="HAMAP-Rule" id="MF_01389"/>
    </source>
</evidence>
<gene>
    <name evidence="1" type="primary">ureG</name>
    <name type="ordered locus">PMT9312_0830</name>
</gene>
<reference key="1">
    <citation type="journal article" date="2006" name="Science">
        <title>Genomic islands and the ecology and evolution of Prochlorococcus.</title>
        <authorList>
            <person name="Coleman M.L."/>
            <person name="Sullivan M.B."/>
            <person name="Martiny A.C."/>
            <person name="Steglich C."/>
            <person name="Barry K."/>
            <person name="Delong E.F."/>
            <person name="Chisholm S.W."/>
        </authorList>
    </citation>
    <scope>NUCLEOTIDE SEQUENCE [LARGE SCALE GENOMIC DNA]</scope>
    <source>
        <strain>MIT 9312</strain>
    </source>
</reference>
<accession>Q31B55</accession>
<protein>
    <recommendedName>
        <fullName evidence="1">Urease accessory protein UreG</fullName>
    </recommendedName>
</protein>
<dbReference type="EMBL" id="CP000111">
    <property type="protein sequence ID" value="ABB49890.1"/>
    <property type="molecule type" value="Genomic_DNA"/>
</dbReference>
<dbReference type="RefSeq" id="WP_011376385.1">
    <property type="nucleotide sequence ID" value="NC_007577.1"/>
</dbReference>
<dbReference type="SMR" id="Q31B55"/>
<dbReference type="STRING" id="74546.PMT9312_0830"/>
<dbReference type="KEGG" id="pmi:PMT9312_0830"/>
<dbReference type="eggNOG" id="COG0378">
    <property type="taxonomic scope" value="Bacteria"/>
</dbReference>
<dbReference type="HOGENOM" id="CLU_072144_1_0_3"/>
<dbReference type="OrthoDB" id="9802035at2"/>
<dbReference type="Proteomes" id="UP000002715">
    <property type="component" value="Chromosome"/>
</dbReference>
<dbReference type="GO" id="GO:0005737">
    <property type="term" value="C:cytoplasm"/>
    <property type="evidence" value="ECO:0007669"/>
    <property type="project" value="UniProtKB-SubCell"/>
</dbReference>
<dbReference type="GO" id="GO:0005525">
    <property type="term" value="F:GTP binding"/>
    <property type="evidence" value="ECO:0007669"/>
    <property type="project" value="UniProtKB-KW"/>
</dbReference>
<dbReference type="GO" id="GO:0003924">
    <property type="term" value="F:GTPase activity"/>
    <property type="evidence" value="ECO:0007669"/>
    <property type="project" value="InterPro"/>
</dbReference>
<dbReference type="GO" id="GO:0016151">
    <property type="term" value="F:nickel cation binding"/>
    <property type="evidence" value="ECO:0007669"/>
    <property type="project" value="UniProtKB-UniRule"/>
</dbReference>
<dbReference type="GO" id="GO:0043419">
    <property type="term" value="P:urea catabolic process"/>
    <property type="evidence" value="ECO:0007669"/>
    <property type="project" value="InterPro"/>
</dbReference>
<dbReference type="CDD" id="cd05540">
    <property type="entry name" value="UreG"/>
    <property type="match status" value="1"/>
</dbReference>
<dbReference type="FunFam" id="3.40.50.300:FF:000208">
    <property type="entry name" value="Urease accessory protein UreG"/>
    <property type="match status" value="1"/>
</dbReference>
<dbReference type="Gene3D" id="3.40.50.300">
    <property type="entry name" value="P-loop containing nucleotide triphosphate hydrolases"/>
    <property type="match status" value="1"/>
</dbReference>
<dbReference type="HAMAP" id="MF_01389">
    <property type="entry name" value="UreG"/>
    <property type="match status" value="1"/>
</dbReference>
<dbReference type="InterPro" id="IPR003495">
    <property type="entry name" value="CobW/HypB/UreG_nucleotide-bd"/>
</dbReference>
<dbReference type="InterPro" id="IPR027417">
    <property type="entry name" value="P-loop_NTPase"/>
</dbReference>
<dbReference type="InterPro" id="IPR004400">
    <property type="entry name" value="UreG"/>
</dbReference>
<dbReference type="NCBIfam" id="TIGR00101">
    <property type="entry name" value="ureG"/>
    <property type="match status" value="1"/>
</dbReference>
<dbReference type="PANTHER" id="PTHR31715">
    <property type="entry name" value="UREASE ACCESSORY PROTEIN G"/>
    <property type="match status" value="1"/>
</dbReference>
<dbReference type="PANTHER" id="PTHR31715:SF0">
    <property type="entry name" value="UREASE ACCESSORY PROTEIN G"/>
    <property type="match status" value="1"/>
</dbReference>
<dbReference type="Pfam" id="PF02492">
    <property type="entry name" value="cobW"/>
    <property type="match status" value="1"/>
</dbReference>
<dbReference type="PIRSF" id="PIRSF005624">
    <property type="entry name" value="Ni-bind_GTPase"/>
    <property type="match status" value="1"/>
</dbReference>
<dbReference type="SUPFAM" id="SSF52540">
    <property type="entry name" value="P-loop containing nucleoside triphosphate hydrolases"/>
    <property type="match status" value="1"/>
</dbReference>
<comment type="function">
    <text evidence="1">Facilitates the functional incorporation of the urease nickel metallocenter. This process requires GTP hydrolysis, probably effectuated by UreG.</text>
</comment>
<comment type="subunit">
    <text evidence="1">Homodimer. UreD, UreF and UreG form a complex that acts as a GTP-hydrolysis-dependent molecular chaperone, activating the urease apoprotein by helping to assemble the nickel containing metallocenter of UreC. The UreE protein probably delivers the nickel.</text>
</comment>
<comment type="subcellular location">
    <subcellularLocation>
        <location evidence="1">Cytoplasm</location>
    </subcellularLocation>
</comment>
<comment type="similarity">
    <text evidence="1">Belongs to the SIMIBI class G3E GTPase family. UreG subfamily.</text>
</comment>
<feature type="chain" id="PRO_0000347418" description="Urease accessory protein UreG">
    <location>
        <begin position="1"/>
        <end position="203"/>
    </location>
</feature>
<feature type="binding site" evidence="1">
    <location>
        <begin position="11"/>
        <end position="18"/>
    </location>
    <ligand>
        <name>GTP</name>
        <dbReference type="ChEBI" id="CHEBI:37565"/>
    </ligand>
</feature>
<proteinExistence type="inferred from homology"/>
<organism>
    <name type="scientific">Prochlorococcus marinus (strain MIT 9312)</name>
    <dbReference type="NCBI Taxonomy" id="74546"/>
    <lineage>
        <taxon>Bacteria</taxon>
        <taxon>Bacillati</taxon>
        <taxon>Cyanobacteriota</taxon>
        <taxon>Cyanophyceae</taxon>
        <taxon>Synechococcales</taxon>
        <taxon>Prochlorococcaceae</taxon>
        <taxon>Prochlorococcus</taxon>
    </lineage>
</organism>
<keyword id="KW-0143">Chaperone</keyword>
<keyword id="KW-0963">Cytoplasm</keyword>
<keyword id="KW-0342">GTP-binding</keyword>
<keyword id="KW-0996">Nickel insertion</keyword>
<keyword id="KW-0547">Nucleotide-binding</keyword>